<feature type="chain" id="PRO_0000263276" description="Peptide chain release factor 1">
    <location>
        <begin position="1"/>
        <end position="361"/>
    </location>
</feature>
<feature type="region of interest" description="Disordered" evidence="2">
    <location>
        <begin position="287"/>
        <end position="313"/>
    </location>
</feature>
<feature type="compositionally biased region" description="Basic and acidic residues" evidence="2">
    <location>
        <begin position="287"/>
        <end position="297"/>
    </location>
</feature>
<feature type="modified residue" description="N5-methylglutamine" evidence="1">
    <location>
        <position position="237"/>
    </location>
</feature>
<accession>Q0BKE8</accession>
<reference key="1">
    <citation type="journal article" date="2006" name="J. Bacteriol.">
        <title>Chromosome rearrangement and diversification of Francisella tularensis revealed by the type B (OSU18) genome sequence.</title>
        <authorList>
            <person name="Petrosino J.F."/>
            <person name="Xiang Q."/>
            <person name="Karpathy S.E."/>
            <person name="Jiang H."/>
            <person name="Yerrapragada S."/>
            <person name="Liu Y."/>
            <person name="Gioia J."/>
            <person name="Hemphill L."/>
            <person name="Gonzalez A."/>
            <person name="Raghavan T.M."/>
            <person name="Uzman A."/>
            <person name="Fox G.E."/>
            <person name="Highlander S."/>
            <person name="Reichard M."/>
            <person name="Morton R.J."/>
            <person name="Clinkenbeard K.D."/>
            <person name="Weinstock G.M."/>
        </authorList>
    </citation>
    <scope>NUCLEOTIDE SEQUENCE [LARGE SCALE GENOMIC DNA]</scope>
    <source>
        <strain>OSU18</strain>
    </source>
</reference>
<gene>
    <name evidence="1" type="primary">prfA</name>
    <name type="ordered locus">FTH_1660</name>
</gene>
<evidence type="ECO:0000255" key="1">
    <source>
        <dbReference type="HAMAP-Rule" id="MF_00093"/>
    </source>
</evidence>
<evidence type="ECO:0000256" key="2">
    <source>
        <dbReference type="SAM" id="MobiDB-lite"/>
    </source>
</evidence>
<sequence>MKDSIKAKLQSLIERHEEVSALLSEAGIISDQNKFRDLSKEYSHLEPIVKAFKEYTQALEDKQAAYEMLNEKDAELVEMAKEELKLANEAIEKLESELQIFLLPRDPNDDANVFLEIRAGTGGDEASIFSGDLFKMYSKYAEQRGWKIEVISASEGEHGGYKEIISRIYGDGVYSQLKFESGAHRVQRVPATESQGRIHTSACTVAVMPEADEVEGIDINPADIKVDTFRASGAGGQHVNKTDSAIRITHIPTGVVVECQDQRSQHKNRAAAMSMLKSKLLQAEIDKQQKEQSDTRKSLVGSGDRSERIRTYNYPQGRVTDHRINLTLYKLDEVMEGSLDSIIQPLVLEHQADLLATMSDE</sequence>
<comment type="function">
    <text evidence="1">Peptide chain release factor 1 directs the termination of translation in response to the peptide chain termination codons UAG and UAA.</text>
</comment>
<comment type="subcellular location">
    <subcellularLocation>
        <location evidence="1">Cytoplasm</location>
    </subcellularLocation>
</comment>
<comment type="PTM">
    <text evidence="1">Methylated by PrmC. Methylation increases the termination efficiency of RF1.</text>
</comment>
<comment type="similarity">
    <text evidence="1">Belongs to the prokaryotic/mitochondrial release factor family.</text>
</comment>
<keyword id="KW-0963">Cytoplasm</keyword>
<keyword id="KW-0488">Methylation</keyword>
<keyword id="KW-0648">Protein biosynthesis</keyword>
<protein>
    <recommendedName>
        <fullName evidence="1">Peptide chain release factor 1</fullName>
        <shortName evidence="1">RF-1</shortName>
    </recommendedName>
</protein>
<organism>
    <name type="scientific">Francisella tularensis subsp. holarctica (strain OSU18)</name>
    <dbReference type="NCBI Taxonomy" id="393011"/>
    <lineage>
        <taxon>Bacteria</taxon>
        <taxon>Pseudomonadati</taxon>
        <taxon>Pseudomonadota</taxon>
        <taxon>Gammaproteobacteria</taxon>
        <taxon>Thiotrichales</taxon>
        <taxon>Francisellaceae</taxon>
        <taxon>Francisella</taxon>
    </lineage>
</organism>
<proteinExistence type="inferred from homology"/>
<name>RF1_FRATO</name>
<dbReference type="EMBL" id="CP000437">
    <property type="protein sequence ID" value="ABI83436.1"/>
    <property type="molecule type" value="Genomic_DNA"/>
</dbReference>
<dbReference type="RefSeq" id="WP_003017177.1">
    <property type="nucleotide sequence ID" value="NC_017463.1"/>
</dbReference>
<dbReference type="SMR" id="Q0BKE8"/>
<dbReference type="KEGG" id="fth:FTH_1660"/>
<dbReference type="GO" id="GO:0005737">
    <property type="term" value="C:cytoplasm"/>
    <property type="evidence" value="ECO:0007669"/>
    <property type="project" value="UniProtKB-SubCell"/>
</dbReference>
<dbReference type="GO" id="GO:0016149">
    <property type="term" value="F:translation release factor activity, codon specific"/>
    <property type="evidence" value="ECO:0007669"/>
    <property type="project" value="UniProtKB-UniRule"/>
</dbReference>
<dbReference type="FunFam" id="3.30.160.20:FF:000004">
    <property type="entry name" value="Peptide chain release factor 1"/>
    <property type="match status" value="1"/>
</dbReference>
<dbReference type="FunFam" id="3.30.70.1660:FF:000002">
    <property type="entry name" value="Peptide chain release factor 1"/>
    <property type="match status" value="1"/>
</dbReference>
<dbReference type="FunFam" id="3.30.70.1660:FF:000004">
    <property type="entry name" value="Peptide chain release factor 1"/>
    <property type="match status" value="1"/>
</dbReference>
<dbReference type="Gene3D" id="3.30.160.20">
    <property type="match status" value="1"/>
</dbReference>
<dbReference type="Gene3D" id="3.30.70.1660">
    <property type="match status" value="2"/>
</dbReference>
<dbReference type="Gene3D" id="6.10.140.1950">
    <property type="match status" value="1"/>
</dbReference>
<dbReference type="HAMAP" id="MF_00093">
    <property type="entry name" value="Rel_fac_1"/>
    <property type="match status" value="1"/>
</dbReference>
<dbReference type="InterPro" id="IPR005139">
    <property type="entry name" value="PCRF"/>
</dbReference>
<dbReference type="InterPro" id="IPR000352">
    <property type="entry name" value="Pep_chain_release_fac_I"/>
</dbReference>
<dbReference type="InterPro" id="IPR045853">
    <property type="entry name" value="Pep_chain_release_fac_I_sf"/>
</dbReference>
<dbReference type="InterPro" id="IPR050057">
    <property type="entry name" value="Prokaryotic/Mito_RF"/>
</dbReference>
<dbReference type="InterPro" id="IPR004373">
    <property type="entry name" value="RF-1"/>
</dbReference>
<dbReference type="NCBIfam" id="TIGR00019">
    <property type="entry name" value="prfA"/>
    <property type="match status" value="1"/>
</dbReference>
<dbReference type="NCBIfam" id="NF001859">
    <property type="entry name" value="PRK00591.1"/>
    <property type="match status" value="1"/>
</dbReference>
<dbReference type="PANTHER" id="PTHR43804">
    <property type="entry name" value="LD18447P"/>
    <property type="match status" value="1"/>
</dbReference>
<dbReference type="PANTHER" id="PTHR43804:SF7">
    <property type="entry name" value="LD18447P"/>
    <property type="match status" value="1"/>
</dbReference>
<dbReference type="Pfam" id="PF03462">
    <property type="entry name" value="PCRF"/>
    <property type="match status" value="1"/>
</dbReference>
<dbReference type="Pfam" id="PF00472">
    <property type="entry name" value="RF-1"/>
    <property type="match status" value="1"/>
</dbReference>
<dbReference type="SMART" id="SM00937">
    <property type="entry name" value="PCRF"/>
    <property type="match status" value="1"/>
</dbReference>
<dbReference type="SUPFAM" id="SSF75620">
    <property type="entry name" value="Release factor"/>
    <property type="match status" value="1"/>
</dbReference>
<dbReference type="PROSITE" id="PS00745">
    <property type="entry name" value="RF_PROK_I"/>
    <property type="match status" value="1"/>
</dbReference>